<reference key="1">
    <citation type="journal article" date="2006" name="Lancet">
        <title>Complete genome sequence of USA300, an epidemic clone of community-acquired meticillin-resistant Staphylococcus aureus.</title>
        <authorList>
            <person name="Diep B.A."/>
            <person name="Gill S.R."/>
            <person name="Chang R.F."/>
            <person name="Phan T.H."/>
            <person name="Chen J.H."/>
            <person name="Davidson M.G."/>
            <person name="Lin F."/>
            <person name="Lin J."/>
            <person name="Carleton H.A."/>
            <person name="Mongodin E.F."/>
            <person name="Sensabaugh G.F."/>
            <person name="Perdreau-Remington F."/>
        </authorList>
    </citation>
    <scope>NUCLEOTIDE SEQUENCE [LARGE SCALE GENOMIC DNA]</scope>
    <source>
        <strain>USA300</strain>
    </source>
</reference>
<keyword id="KW-0067">ATP-binding</keyword>
<keyword id="KW-0315">Glutamine amidotransferase</keyword>
<keyword id="KW-0332">GMP biosynthesis</keyword>
<keyword id="KW-0436">Ligase</keyword>
<keyword id="KW-0547">Nucleotide-binding</keyword>
<keyword id="KW-0658">Purine biosynthesis</keyword>
<sequence length="513" mass="58230">MEMAKEQELILVLDFGSQYNQLITRRIREMGVYSELHDHEISIEEIKKMNPKGIILSGGPNSVYEEGSFTIDPEIYNLGIPVLGICYGMQLTTKLLGGKVERANEREYGKAIINAKSDELFAGLPAEQTVWMSHSDKVIEIPEGFEVIADSPSTDYAAIEDKKRRIYGVQFHPEVRHTEYGNDLLNNFVRRVCDCRGQWTMENFIEIEIEKIRQRVGDRRVLCAMSGGVDSSVVAVLLHKAIGDQLTCIFVDHGLLRKGEGDMVMEQFGEGFNMNIIRVNAKDRFMNKLKGVSDPEQKRKIIGNEFVYVFDDEASKLKGVDFLAQGTLYTDVIESGTKTAQTIKSHHNVGGLPEDMEFELIEPINTLFKDEVRKLGIELGIPEHLVWRQPFPGPGLGIRVLGEITEDKLEIVRESDAILRQVIREEGLEREIWQYFTVLPNIQSVGVMGDYRTYDHTVGIRAVTSIDGMTSDFARIDWEVLQKISSRIVNEVDHVNRVVYDITSKPPSTIEWE</sequence>
<feature type="chain" id="PRO_1000120421" description="GMP synthase [glutamine-hydrolyzing]">
    <location>
        <begin position="1"/>
        <end position="513"/>
    </location>
</feature>
<feature type="domain" description="Glutamine amidotransferase type-1" evidence="1">
    <location>
        <begin position="9"/>
        <end position="198"/>
    </location>
</feature>
<feature type="domain" description="GMPS ATP-PPase" evidence="1">
    <location>
        <begin position="199"/>
        <end position="388"/>
    </location>
</feature>
<feature type="active site" description="Nucleophile" evidence="1">
    <location>
        <position position="86"/>
    </location>
</feature>
<feature type="active site" evidence="1">
    <location>
        <position position="172"/>
    </location>
</feature>
<feature type="active site" evidence="1">
    <location>
        <position position="174"/>
    </location>
</feature>
<feature type="binding site" evidence="1">
    <location>
        <begin position="226"/>
        <end position="232"/>
    </location>
    <ligand>
        <name>ATP</name>
        <dbReference type="ChEBI" id="CHEBI:30616"/>
    </ligand>
</feature>
<gene>
    <name evidence="1" type="primary">guaA</name>
    <name type="ordered locus">SAUSA300_0389</name>
</gene>
<name>GUAA_STAA3</name>
<comment type="function">
    <text evidence="1">Catalyzes the synthesis of GMP from XMP.</text>
</comment>
<comment type="catalytic activity">
    <reaction evidence="1">
        <text>XMP + L-glutamine + ATP + H2O = GMP + L-glutamate + AMP + diphosphate + 2 H(+)</text>
        <dbReference type="Rhea" id="RHEA:11680"/>
        <dbReference type="ChEBI" id="CHEBI:15377"/>
        <dbReference type="ChEBI" id="CHEBI:15378"/>
        <dbReference type="ChEBI" id="CHEBI:29985"/>
        <dbReference type="ChEBI" id="CHEBI:30616"/>
        <dbReference type="ChEBI" id="CHEBI:33019"/>
        <dbReference type="ChEBI" id="CHEBI:57464"/>
        <dbReference type="ChEBI" id="CHEBI:58115"/>
        <dbReference type="ChEBI" id="CHEBI:58359"/>
        <dbReference type="ChEBI" id="CHEBI:456215"/>
        <dbReference type="EC" id="6.3.5.2"/>
    </reaction>
</comment>
<comment type="pathway">
    <text evidence="1">Purine metabolism; GMP biosynthesis; GMP from XMP (L-Gln route): step 1/1.</text>
</comment>
<comment type="subunit">
    <text evidence="1">Homodimer.</text>
</comment>
<accession>Q2FJM5</accession>
<organism>
    <name type="scientific">Staphylococcus aureus (strain USA300)</name>
    <dbReference type="NCBI Taxonomy" id="367830"/>
    <lineage>
        <taxon>Bacteria</taxon>
        <taxon>Bacillati</taxon>
        <taxon>Bacillota</taxon>
        <taxon>Bacilli</taxon>
        <taxon>Bacillales</taxon>
        <taxon>Staphylococcaceae</taxon>
        <taxon>Staphylococcus</taxon>
    </lineage>
</organism>
<proteinExistence type="inferred from homology"/>
<evidence type="ECO:0000255" key="1">
    <source>
        <dbReference type="HAMAP-Rule" id="MF_00344"/>
    </source>
</evidence>
<dbReference type="EC" id="6.3.5.2" evidence="1"/>
<dbReference type="EMBL" id="CP000255">
    <property type="protein sequence ID" value="ABD20591.1"/>
    <property type="molecule type" value="Genomic_DNA"/>
</dbReference>
<dbReference type="RefSeq" id="WP_000424966.1">
    <property type="nucleotide sequence ID" value="NZ_CP027476.1"/>
</dbReference>
<dbReference type="SMR" id="Q2FJM5"/>
<dbReference type="MEROPS" id="C26.957"/>
<dbReference type="KEGG" id="saa:SAUSA300_0389"/>
<dbReference type="HOGENOM" id="CLU_014340_0_5_9"/>
<dbReference type="OMA" id="IWQSFAV"/>
<dbReference type="UniPathway" id="UPA00189">
    <property type="reaction ID" value="UER00296"/>
</dbReference>
<dbReference type="Proteomes" id="UP000001939">
    <property type="component" value="Chromosome"/>
</dbReference>
<dbReference type="GO" id="GO:0005829">
    <property type="term" value="C:cytosol"/>
    <property type="evidence" value="ECO:0007669"/>
    <property type="project" value="TreeGrafter"/>
</dbReference>
<dbReference type="GO" id="GO:0005524">
    <property type="term" value="F:ATP binding"/>
    <property type="evidence" value="ECO:0007669"/>
    <property type="project" value="UniProtKB-UniRule"/>
</dbReference>
<dbReference type="GO" id="GO:0003921">
    <property type="term" value="F:GMP synthase activity"/>
    <property type="evidence" value="ECO:0007669"/>
    <property type="project" value="InterPro"/>
</dbReference>
<dbReference type="CDD" id="cd01742">
    <property type="entry name" value="GATase1_GMP_Synthase"/>
    <property type="match status" value="1"/>
</dbReference>
<dbReference type="CDD" id="cd01997">
    <property type="entry name" value="GMP_synthase_C"/>
    <property type="match status" value="1"/>
</dbReference>
<dbReference type="FunFam" id="3.30.300.10:FF:000002">
    <property type="entry name" value="GMP synthase [glutamine-hydrolyzing]"/>
    <property type="match status" value="1"/>
</dbReference>
<dbReference type="FunFam" id="3.40.50.620:FF:000001">
    <property type="entry name" value="GMP synthase [glutamine-hydrolyzing]"/>
    <property type="match status" value="1"/>
</dbReference>
<dbReference type="FunFam" id="3.40.50.880:FF:000001">
    <property type="entry name" value="GMP synthase [glutamine-hydrolyzing]"/>
    <property type="match status" value="1"/>
</dbReference>
<dbReference type="Gene3D" id="3.30.300.10">
    <property type="match status" value="1"/>
</dbReference>
<dbReference type="Gene3D" id="3.40.50.880">
    <property type="match status" value="1"/>
</dbReference>
<dbReference type="Gene3D" id="3.40.50.620">
    <property type="entry name" value="HUPs"/>
    <property type="match status" value="1"/>
</dbReference>
<dbReference type="HAMAP" id="MF_00344">
    <property type="entry name" value="GMP_synthase"/>
    <property type="match status" value="1"/>
</dbReference>
<dbReference type="InterPro" id="IPR029062">
    <property type="entry name" value="Class_I_gatase-like"/>
</dbReference>
<dbReference type="InterPro" id="IPR017926">
    <property type="entry name" value="GATASE"/>
</dbReference>
<dbReference type="InterPro" id="IPR001674">
    <property type="entry name" value="GMP_synth_C"/>
</dbReference>
<dbReference type="InterPro" id="IPR004739">
    <property type="entry name" value="GMP_synth_GATase"/>
</dbReference>
<dbReference type="InterPro" id="IPR022955">
    <property type="entry name" value="GMP_synthase"/>
</dbReference>
<dbReference type="InterPro" id="IPR025777">
    <property type="entry name" value="GMPS_ATP_PPase_dom"/>
</dbReference>
<dbReference type="InterPro" id="IPR014729">
    <property type="entry name" value="Rossmann-like_a/b/a_fold"/>
</dbReference>
<dbReference type="NCBIfam" id="TIGR00884">
    <property type="entry name" value="guaA_Cterm"/>
    <property type="match status" value="1"/>
</dbReference>
<dbReference type="NCBIfam" id="TIGR00888">
    <property type="entry name" value="guaA_Nterm"/>
    <property type="match status" value="1"/>
</dbReference>
<dbReference type="NCBIfam" id="NF000848">
    <property type="entry name" value="PRK00074.1"/>
    <property type="match status" value="1"/>
</dbReference>
<dbReference type="PANTHER" id="PTHR11922:SF2">
    <property type="entry name" value="GMP SYNTHASE [GLUTAMINE-HYDROLYZING]"/>
    <property type="match status" value="1"/>
</dbReference>
<dbReference type="PANTHER" id="PTHR11922">
    <property type="entry name" value="GMP SYNTHASE-RELATED"/>
    <property type="match status" value="1"/>
</dbReference>
<dbReference type="Pfam" id="PF00117">
    <property type="entry name" value="GATase"/>
    <property type="match status" value="1"/>
</dbReference>
<dbReference type="Pfam" id="PF00958">
    <property type="entry name" value="GMP_synt_C"/>
    <property type="match status" value="1"/>
</dbReference>
<dbReference type="Pfam" id="PF03054">
    <property type="entry name" value="tRNA_Me_trans"/>
    <property type="match status" value="1"/>
</dbReference>
<dbReference type="PRINTS" id="PR00097">
    <property type="entry name" value="ANTSNTHASEII"/>
</dbReference>
<dbReference type="PRINTS" id="PR00099">
    <property type="entry name" value="CPSGATASE"/>
</dbReference>
<dbReference type="PRINTS" id="PR00096">
    <property type="entry name" value="GATASE"/>
</dbReference>
<dbReference type="SUPFAM" id="SSF52402">
    <property type="entry name" value="Adenine nucleotide alpha hydrolases-like"/>
    <property type="match status" value="1"/>
</dbReference>
<dbReference type="SUPFAM" id="SSF52317">
    <property type="entry name" value="Class I glutamine amidotransferase-like"/>
    <property type="match status" value="1"/>
</dbReference>
<dbReference type="SUPFAM" id="SSF54810">
    <property type="entry name" value="GMP synthetase C-terminal dimerisation domain"/>
    <property type="match status" value="1"/>
</dbReference>
<dbReference type="PROSITE" id="PS51273">
    <property type="entry name" value="GATASE_TYPE_1"/>
    <property type="match status" value="1"/>
</dbReference>
<dbReference type="PROSITE" id="PS51553">
    <property type="entry name" value="GMPS_ATP_PPASE"/>
    <property type="match status" value="1"/>
</dbReference>
<protein>
    <recommendedName>
        <fullName evidence="1">GMP synthase [glutamine-hydrolyzing]</fullName>
        <ecNumber evidence="1">6.3.5.2</ecNumber>
    </recommendedName>
    <alternativeName>
        <fullName evidence="1">GMP synthetase</fullName>
    </alternativeName>
    <alternativeName>
        <fullName evidence="1">Glutamine amidotransferase</fullName>
    </alternativeName>
</protein>